<sequence>MQAQPIHARLMNGEVLSQDDATAFMREVMSGDMSGVRMAAALAALRVRGETPEEIAGFAQAMRESAVTVKVRPRDVLMDVVGTGGDGAHTFNISTTTAFVLAGAGVPIAKHGNRAASSRAGSADVLEALGVNLDASPEVIQEAIDTLGVGFMFARNYHPALRHAAPVRSDLAARTVFNILGPLSNPAGATHLVVGVFRADLTRTLAEALRHLGAKGATVVYGDGLDEFTVCGPNTVSGLRDGEIIDRTMHPEEFGVDLHPKTAIVGGSPAENAEITHALLTGGGTPAQKDIVALNAGAALRTAGRVGTIREGVEQAREVMKGGQGWEMLQKYGALTKR</sequence>
<name>TRPD_DEIRA</name>
<organism>
    <name type="scientific">Deinococcus radiodurans (strain ATCC 13939 / DSM 20539 / JCM 16871 / CCUG 27074 / LMG 4051 / NBRC 15346 / NCIMB 9279 / VKM B-1422 / R1)</name>
    <dbReference type="NCBI Taxonomy" id="243230"/>
    <lineage>
        <taxon>Bacteria</taxon>
        <taxon>Thermotogati</taxon>
        <taxon>Deinococcota</taxon>
        <taxon>Deinococci</taxon>
        <taxon>Deinococcales</taxon>
        <taxon>Deinococcaceae</taxon>
        <taxon>Deinococcus</taxon>
    </lineage>
</organism>
<protein>
    <recommendedName>
        <fullName evidence="1">Anthranilate phosphoribosyltransferase</fullName>
        <ecNumber evidence="1">2.4.2.18</ecNumber>
    </recommendedName>
</protein>
<evidence type="ECO:0000255" key="1">
    <source>
        <dbReference type="HAMAP-Rule" id="MF_00211"/>
    </source>
</evidence>
<evidence type="ECO:0000305" key="2"/>
<gene>
    <name evidence="1" type="primary">trpD</name>
    <name type="ordered locus">DR_1767</name>
</gene>
<dbReference type="EC" id="2.4.2.18" evidence="1"/>
<dbReference type="EMBL" id="AE000513">
    <property type="protein sequence ID" value="AAF11322.1"/>
    <property type="status" value="ALT_INIT"/>
    <property type="molecule type" value="Genomic_DNA"/>
</dbReference>
<dbReference type="PIR" id="D75356">
    <property type="entry name" value="D75356"/>
</dbReference>
<dbReference type="RefSeq" id="NP_295490.1">
    <property type="nucleotide sequence ID" value="NC_001263.1"/>
</dbReference>
<dbReference type="RefSeq" id="WP_027480347.1">
    <property type="nucleotide sequence ID" value="NC_001263.1"/>
</dbReference>
<dbReference type="SMR" id="Q9RTJ5"/>
<dbReference type="FunCoup" id="Q9RTJ5">
    <property type="interactions" value="408"/>
</dbReference>
<dbReference type="STRING" id="243230.DR_1767"/>
<dbReference type="PaxDb" id="243230-DR_1767"/>
<dbReference type="EnsemblBacteria" id="AAF11322">
    <property type="protein sequence ID" value="AAF11322"/>
    <property type="gene ID" value="DR_1767"/>
</dbReference>
<dbReference type="GeneID" id="69518007"/>
<dbReference type="KEGG" id="dra:DR_1767"/>
<dbReference type="PATRIC" id="fig|243230.17.peg.1979"/>
<dbReference type="eggNOG" id="COG0547">
    <property type="taxonomic scope" value="Bacteria"/>
</dbReference>
<dbReference type="HOGENOM" id="CLU_034315_2_1_0"/>
<dbReference type="InParanoid" id="Q9RTJ5"/>
<dbReference type="OrthoDB" id="9806430at2"/>
<dbReference type="UniPathway" id="UPA00035">
    <property type="reaction ID" value="UER00041"/>
</dbReference>
<dbReference type="Proteomes" id="UP000002524">
    <property type="component" value="Chromosome 1"/>
</dbReference>
<dbReference type="GO" id="GO:0005829">
    <property type="term" value="C:cytosol"/>
    <property type="evidence" value="ECO:0000318"/>
    <property type="project" value="GO_Central"/>
</dbReference>
<dbReference type="GO" id="GO:0004048">
    <property type="term" value="F:anthranilate phosphoribosyltransferase activity"/>
    <property type="evidence" value="ECO:0007669"/>
    <property type="project" value="UniProtKB-UniRule"/>
</dbReference>
<dbReference type="GO" id="GO:0000287">
    <property type="term" value="F:magnesium ion binding"/>
    <property type="evidence" value="ECO:0007669"/>
    <property type="project" value="UniProtKB-UniRule"/>
</dbReference>
<dbReference type="GO" id="GO:0000162">
    <property type="term" value="P:L-tryptophan biosynthetic process"/>
    <property type="evidence" value="ECO:0000318"/>
    <property type="project" value="GO_Central"/>
</dbReference>
<dbReference type="FunFam" id="3.40.1030.10:FF:000002">
    <property type="entry name" value="Anthranilate phosphoribosyltransferase"/>
    <property type="match status" value="1"/>
</dbReference>
<dbReference type="Gene3D" id="3.40.1030.10">
    <property type="entry name" value="Nucleoside phosphorylase/phosphoribosyltransferase catalytic domain"/>
    <property type="match status" value="1"/>
</dbReference>
<dbReference type="Gene3D" id="1.20.970.10">
    <property type="entry name" value="Transferase, Pyrimidine Nucleoside Phosphorylase, Chain C"/>
    <property type="match status" value="1"/>
</dbReference>
<dbReference type="HAMAP" id="MF_00211">
    <property type="entry name" value="TrpD"/>
    <property type="match status" value="1"/>
</dbReference>
<dbReference type="InterPro" id="IPR005940">
    <property type="entry name" value="Anthranilate_Pribosyl_Tfrase"/>
</dbReference>
<dbReference type="InterPro" id="IPR000312">
    <property type="entry name" value="Glycosyl_Trfase_fam3"/>
</dbReference>
<dbReference type="InterPro" id="IPR017459">
    <property type="entry name" value="Glycosyl_Trfase_fam3_N_dom"/>
</dbReference>
<dbReference type="InterPro" id="IPR036320">
    <property type="entry name" value="Glycosyl_Trfase_fam3_N_dom_sf"/>
</dbReference>
<dbReference type="InterPro" id="IPR035902">
    <property type="entry name" value="Nuc_phospho_transferase"/>
</dbReference>
<dbReference type="NCBIfam" id="TIGR01245">
    <property type="entry name" value="trpD"/>
    <property type="match status" value="1"/>
</dbReference>
<dbReference type="PANTHER" id="PTHR43285">
    <property type="entry name" value="ANTHRANILATE PHOSPHORIBOSYLTRANSFERASE"/>
    <property type="match status" value="1"/>
</dbReference>
<dbReference type="PANTHER" id="PTHR43285:SF2">
    <property type="entry name" value="ANTHRANILATE PHOSPHORIBOSYLTRANSFERASE"/>
    <property type="match status" value="1"/>
</dbReference>
<dbReference type="Pfam" id="PF02885">
    <property type="entry name" value="Glycos_trans_3N"/>
    <property type="match status" value="1"/>
</dbReference>
<dbReference type="Pfam" id="PF00591">
    <property type="entry name" value="Glycos_transf_3"/>
    <property type="match status" value="1"/>
</dbReference>
<dbReference type="SUPFAM" id="SSF52418">
    <property type="entry name" value="Nucleoside phosphorylase/phosphoribosyltransferase catalytic domain"/>
    <property type="match status" value="1"/>
</dbReference>
<dbReference type="SUPFAM" id="SSF47648">
    <property type="entry name" value="Nucleoside phosphorylase/phosphoribosyltransferase N-terminal domain"/>
    <property type="match status" value="1"/>
</dbReference>
<reference key="1">
    <citation type="journal article" date="1999" name="Science">
        <title>Genome sequence of the radioresistant bacterium Deinococcus radiodurans R1.</title>
        <authorList>
            <person name="White O."/>
            <person name="Eisen J.A."/>
            <person name="Heidelberg J.F."/>
            <person name="Hickey E.K."/>
            <person name="Peterson J.D."/>
            <person name="Dodson R.J."/>
            <person name="Haft D.H."/>
            <person name="Gwinn M.L."/>
            <person name="Nelson W.C."/>
            <person name="Richardson D.L."/>
            <person name="Moffat K.S."/>
            <person name="Qin H."/>
            <person name="Jiang L."/>
            <person name="Pamphile W."/>
            <person name="Crosby M."/>
            <person name="Shen M."/>
            <person name="Vamathevan J.J."/>
            <person name="Lam P."/>
            <person name="McDonald L.A."/>
            <person name="Utterback T.R."/>
            <person name="Zalewski C."/>
            <person name="Makarova K.S."/>
            <person name="Aravind L."/>
            <person name="Daly M.J."/>
            <person name="Minton K.W."/>
            <person name="Fleischmann R.D."/>
            <person name="Ketchum K.A."/>
            <person name="Nelson K.E."/>
            <person name="Salzberg S.L."/>
            <person name="Smith H.O."/>
            <person name="Venter J.C."/>
            <person name="Fraser C.M."/>
        </authorList>
    </citation>
    <scope>NUCLEOTIDE SEQUENCE [LARGE SCALE GENOMIC DNA]</scope>
    <source>
        <strain>ATCC 13939 / DSM 20539 / JCM 16871 / CCUG 27074 / LMG 4051 / NBRC 15346 / NCIMB 9279 / VKM B-1422 / R1</strain>
    </source>
</reference>
<feature type="chain" id="PRO_0000154446" description="Anthranilate phosphoribosyltransferase">
    <location>
        <begin position="1"/>
        <end position="338"/>
    </location>
</feature>
<feature type="binding site" evidence="1">
    <location>
        <position position="82"/>
    </location>
    <ligand>
        <name>5-phospho-alpha-D-ribose 1-diphosphate</name>
        <dbReference type="ChEBI" id="CHEBI:58017"/>
    </ligand>
</feature>
<feature type="binding site" evidence="1">
    <location>
        <position position="82"/>
    </location>
    <ligand>
        <name>anthranilate</name>
        <dbReference type="ChEBI" id="CHEBI:16567"/>
        <label>1</label>
    </ligand>
</feature>
<feature type="binding site" evidence="1">
    <location>
        <begin position="85"/>
        <end position="86"/>
    </location>
    <ligand>
        <name>5-phospho-alpha-D-ribose 1-diphosphate</name>
        <dbReference type="ChEBI" id="CHEBI:58017"/>
    </ligand>
</feature>
<feature type="binding site" evidence="1">
    <location>
        <position position="90"/>
    </location>
    <ligand>
        <name>5-phospho-alpha-D-ribose 1-diphosphate</name>
        <dbReference type="ChEBI" id="CHEBI:58017"/>
    </ligand>
</feature>
<feature type="binding site" evidence="1">
    <location>
        <begin position="92"/>
        <end position="95"/>
    </location>
    <ligand>
        <name>5-phospho-alpha-D-ribose 1-diphosphate</name>
        <dbReference type="ChEBI" id="CHEBI:58017"/>
    </ligand>
</feature>
<feature type="binding site" evidence="1">
    <location>
        <position position="94"/>
    </location>
    <ligand>
        <name>Mg(2+)</name>
        <dbReference type="ChEBI" id="CHEBI:18420"/>
        <label>1</label>
    </ligand>
</feature>
<feature type="binding site" evidence="1">
    <location>
        <begin position="110"/>
        <end position="118"/>
    </location>
    <ligand>
        <name>5-phospho-alpha-D-ribose 1-diphosphate</name>
        <dbReference type="ChEBI" id="CHEBI:58017"/>
    </ligand>
</feature>
<feature type="binding site" evidence="1">
    <location>
        <position position="113"/>
    </location>
    <ligand>
        <name>anthranilate</name>
        <dbReference type="ChEBI" id="CHEBI:16567"/>
        <label>1</label>
    </ligand>
</feature>
<feature type="binding site" evidence="1">
    <location>
        <position position="122"/>
    </location>
    <ligand>
        <name>5-phospho-alpha-D-ribose 1-diphosphate</name>
        <dbReference type="ChEBI" id="CHEBI:58017"/>
    </ligand>
</feature>
<feature type="binding site" evidence="1">
    <location>
        <position position="168"/>
    </location>
    <ligand>
        <name>anthranilate</name>
        <dbReference type="ChEBI" id="CHEBI:16567"/>
        <label>2</label>
    </ligand>
</feature>
<feature type="binding site" evidence="1">
    <location>
        <position position="226"/>
    </location>
    <ligand>
        <name>Mg(2+)</name>
        <dbReference type="ChEBI" id="CHEBI:18420"/>
        <label>2</label>
    </ligand>
</feature>
<feature type="binding site" evidence="1">
    <location>
        <position position="227"/>
    </location>
    <ligand>
        <name>Mg(2+)</name>
        <dbReference type="ChEBI" id="CHEBI:18420"/>
        <label>1</label>
    </ligand>
</feature>
<feature type="binding site" evidence="1">
    <location>
        <position position="227"/>
    </location>
    <ligand>
        <name>Mg(2+)</name>
        <dbReference type="ChEBI" id="CHEBI:18420"/>
        <label>2</label>
    </ligand>
</feature>
<comment type="function">
    <text evidence="1">Catalyzes the transfer of the phosphoribosyl group of 5-phosphorylribose-1-pyrophosphate (PRPP) to anthranilate to yield N-(5'-phosphoribosyl)-anthranilate (PRA).</text>
</comment>
<comment type="catalytic activity">
    <reaction evidence="1">
        <text>N-(5-phospho-beta-D-ribosyl)anthranilate + diphosphate = 5-phospho-alpha-D-ribose 1-diphosphate + anthranilate</text>
        <dbReference type="Rhea" id="RHEA:11768"/>
        <dbReference type="ChEBI" id="CHEBI:16567"/>
        <dbReference type="ChEBI" id="CHEBI:18277"/>
        <dbReference type="ChEBI" id="CHEBI:33019"/>
        <dbReference type="ChEBI" id="CHEBI:58017"/>
        <dbReference type="EC" id="2.4.2.18"/>
    </reaction>
</comment>
<comment type="cofactor">
    <cofactor evidence="1">
        <name>Mg(2+)</name>
        <dbReference type="ChEBI" id="CHEBI:18420"/>
    </cofactor>
    <text evidence="1">Binds 2 magnesium ions per monomer.</text>
</comment>
<comment type="pathway">
    <text evidence="1">Amino-acid biosynthesis; L-tryptophan biosynthesis; L-tryptophan from chorismate: step 2/5.</text>
</comment>
<comment type="subunit">
    <text evidence="1">Homodimer.</text>
</comment>
<comment type="similarity">
    <text evidence="1">Belongs to the anthranilate phosphoribosyltransferase family.</text>
</comment>
<comment type="sequence caution" evidence="2">
    <conflict type="erroneous initiation">
        <sequence resource="EMBL-CDS" id="AAF11322"/>
    </conflict>
    <text>Extended N-terminus.</text>
</comment>
<proteinExistence type="inferred from homology"/>
<accession>Q9RTJ5</accession>
<keyword id="KW-0028">Amino-acid biosynthesis</keyword>
<keyword id="KW-0057">Aromatic amino acid biosynthesis</keyword>
<keyword id="KW-0328">Glycosyltransferase</keyword>
<keyword id="KW-0460">Magnesium</keyword>
<keyword id="KW-0479">Metal-binding</keyword>
<keyword id="KW-1185">Reference proteome</keyword>
<keyword id="KW-0808">Transferase</keyword>
<keyword id="KW-0822">Tryptophan biosynthesis</keyword>